<accession>Q8ZPK1</accession>
<proteinExistence type="evidence at protein level"/>
<keyword id="KW-0997">Cell inner membrane</keyword>
<keyword id="KW-1003">Cell membrane</keyword>
<keyword id="KW-0472">Membrane</keyword>
<keyword id="KW-1185">Reference proteome</keyword>
<keyword id="KW-0812">Transmembrane</keyword>
<keyword id="KW-1133">Transmembrane helix</keyword>
<keyword id="KW-0813">Transport</keyword>
<sequence length="236" mass="25411">MHTLTLKRVLGFTIVILLLLALFIWGIGLETLKARQVDLLYLGQRHLMLVFTSMFFALLVGIPSGILLSRPAAKGFAEYVMQIFNVGNTLPPLAVLALAMVIIGIGDTPAIVALFLASLLPIVRNTYAGLCSVPASLIEAANGIGMTKWQRLRQVELPNAWPVMLSGIRIATAINVGTAPLAFLIGASSYGELIFPGIYLNDFPTLILGATATALFALILDTLLAWFGRRLSPHTV</sequence>
<comment type="function">
    <text evidence="3">Part of the OsmU ABC transporter complex, which is involved in the uptake of osmoprotectants such as choline-O-sulfate and glycine betaine. Probably responsible for the translocation of the substrate across the membrane.</text>
</comment>
<comment type="subunit">
    <text evidence="5">The complex is composed of two ATP-binding proteins (OsmV), two transmembrane proteins (OsmW and OsmY) and a solute-binding protein (OsmX).</text>
</comment>
<comment type="subcellular location">
    <subcellularLocation>
        <location evidence="1">Cell inner membrane</location>
        <topology evidence="2">Multi-pass membrane protein</topology>
    </subcellularLocation>
</comment>
<comment type="induction">
    <text evidence="3">Induced by osmotic stress. Part of the osmU operon, which consists of four genes (osmV, osmW, osmX and osmY).</text>
</comment>
<comment type="disruption phenotype">
    <text evidence="3">Deletion of the osmU operon eliminates the residual osmoprotection by glycine betaine in a mutant that is lacking the ProP and the ProU systems. OsmU deletion has no effect on the utilization of glycine betaine as an osmoprotectant when ProP or ProU are functional.</text>
</comment>
<comment type="similarity">
    <text evidence="4">Belongs to the binding-protein-dependent transport system permease family.</text>
</comment>
<reference key="1">
    <citation type="journal article" date="2001" name="Nature">
        <title>Complete genome sequence of Salmonella enterica serovar Typhimurium LT2.</title>
        <authorList>
            <person name="McClelland M."/>
            <person name="Sanderson K.E."/>
            <person name="Spieth J."/>
            <person name="Clifton S.W."/>
            <person name="Latreille P."/>
            <person name="Courtney L."/>
            <person name="Porwollik S."/>
            <person name="Ali J."/>
            <person name="Dante M."/>
            <person name="Du F."/>
            <person name="Hou S."/>
            <person name="Layman D."/>
            <person name="Leonard S."/>
            <person name="Nguyen C."/>
            <person name="Scott K."/>
            <person name="Holmes A."/>
            <person name="Grewal N."/>
            <person name="Mulvaney E."/>
            <person name="Ryan E."/>
            <person name="Sun H."/>
            <person name="Florea L."/>
            <person name="Miller W."/>
            <person name="Stoneking T."/>
            <person name="Nhan M."/>
            <person name="Waterston R."/>
            <person name="Wilson R.K."/>
        </authorList>
    </citation>
    <scope>NUCLEOTIDE SEQUENCE [LARGE SCALE GENOMIC DNA]</scope>
    <source>
        <strain>LT2 / SGSC1412 / ATCC 700720</strain>
    </source>
</reference>
<reference key="2">
    <citation type="journal article" date="2012" name="J. Bacteriol.">
        <title>Identification of a third osmoprotectant transport system, the osmU system, in Salmonella enterica.</title>
        <authorList>
            <person name="Frossard S.M."/>
            <person name="Khan A.A."/>
            <person name="Warrick E.C."/>
            <person name="Gately J.M."/>
            <person name="Hanson A.D."/>
            <person name="Oldham M.L."/>
            <person name="Sanders D.A."/>
            <person name="Csonka L.N."/>
        </authorList>
    </citation>
    <scope>FUNCTION</scope>
    <scope>SUBUNIT</scope>
    <scope>INDUCTION</scope>
    <scope>DISRUPTION PHENOTYPE</scope>
    <scope>GENE NAME</scope>
    <source>
        <strain>LT2</strain>
    </source>
</reference>
<organism>
    <name type="scientific">Salmonella typhimurium (strain LT2 / SGSC1412 / ATCC 700720)</name>
    <dbReference type="NCBI Taxonomy" id="99287"/>
    <lineage>
        <taxon>Bacteria</taxon>
        <taxon>Pseudomonadati</taxon>
        <taxon>Pseudomonadota</taxon>
        <taxon>Gammaproteobacteria</taxon>
        <taxon>Enterobacterales</taxon>
        <taxon>Enterobacteriaceae</taxon>
        <taxon>Salmonella</taxon>
    </lineage>
</organism>
<evidence type="ECO:0000250" key="1"/>
<evidence type="ECO:0000255" key="2">
    <source>
        <dbReference type="PROSITE-ProRule" id="PRU00441"/>
    </source>
</evidence>
<evidence type="ECO:0000269" key="3">
    <source>
    </source>
</evidence>
<evidence type="ECO:0000305" key="4"/>
<evidence type="ECO:0000305" key="5">
    <source>
    </source>
</evidence>
<protein>
    <recommendedName>
        <fullName>Osmoprotectant import permease protein OsmY</fullName>
    </recommendedName>
</protein>
<dbReference type="EMBL" id="AE006468">
    <property type="protein sequence ID" value="AAL20413.1"/>
    <property type="molecule type" value="Genomic_DNA"/>
</dbReference>
<dbReference type="RefSeq" id="NP_460454.1">
    <property type="nucleotide sequence ID" value="NC_003197.2"/>
</dbReference>
<dbReference type="RefSeq" id="WP_000557304.1">
    <property type="nucleotide sequence ID" value="NC_003197.2"/>
</dbReference>
<dbReference type="SMR" id="Q8ZPK1"/>
<dbReference type="STRING" id="99287.STM1494"/>
<dbReference type="TCDB" id="3.A.1.12.14">
    <property type="family name" value="the atp-binding cassette (abc) superfamily"/>
</dbReference>
<dbReference type="PaxDb" id="99287-STM1494"/>
<dbReference type="GeneID" id="1253012"/>
<dbReference type="KEGG" id="stm:STM1494"/>
<dbReference type="PATRIC" id="fig|99287.12.peg.1579"/>
<dbReference type="HOGENOM" id="CLU_046113_7_0_6"/>
<dbReference type="OMA" id="STQMLMG"/>
<dbReference type="PhylomeDB" id="Q8ZPK1"/>
<dbReference type="BioCyc" id="SENT99287:STM1494-MONOMER"/>
<dbReference type="Proteomes" id="UP000001014">
    <property type="component" value="Chromosome"/>
</dbReference>
<dbReference type="GO" id="GO:0005886">
    <property type="term" value="C:plasma membrane"/>
    <property type="evidence" value="ECO:0000318"/>
    <property type="project" value="GO_Central"/>
</dbReference>
<dbReference type="GO" id="GO:0055085">
    <property type="term" value="P:transmembrane transport"/>
    <property type="evidence" value="ECO:0007669"/>
    <property type="project" value="InterPro"/>
</dbReference>
<dbReference type="CDD" id="cd06261">
    <property type="entry name" value="TM_PBP2"/>
    <property type="match status" value="1"/>
</dbReference>
<dbReference type="FunFam" id="1.10.3720.10:FF:000001">
    <property type="entry name" value="Glycine betaine ABC transporter, permease"/>
    <property type="match status" value="1"/>
</dbReference>
<dbReference type="Gene3D" id="1.10.3720.10">
    <property type="entry name" value="MetI-like"/>
    <property type="match status" value="1"/>
</dbReference>
<dbReference type="InterPro" id="IPR051204">
    <property type="entry name" value="ABC_transp_perm/SBD"/>
</dbReference>
<dbReference type="InterPro" id="IPR000515">
    <property type="entry name" value="MetI-like"/>
</dbReference>
<dbReference type="InterPro" id="IPR035906">
    <property type="entry name" value="MetI-like_sf"/>
</dbReference>
<dbReference type="PANTHER" id="PTHR30177">
    <property type="entry name" value="GLYCINE BETAINE/L-PROLINE TRANSPORT SYSTEM PERMEASE PROTEIN PROW"/>
    <property type="match status" value="1"/>
</dbReference>
<dbReference type="PANTHER" id="PTHR30177:SF4">
    <property type="entry name" value="OSMOPROTECTANT IMPORT PERMEASE PROTEIN OSMW"/>
    <property type="match status" value="1"/>
</dbReference>
<dbReference type="Pfam" id="PF00528">
    <property type="entry name" value="BPD_transp_1"/>
    <property type="match status" value="1"/>
</dbReference>
<dbReference type="SUPFAM" id="SSF161098">
    <property type="entry name" value="MetI-like"/>
    <property type="match status" value="1"/>
</dbReference>
<dbReference type="PROSITE" id="PS50928">
    <property type="entry name" value="ABC_TM1"/>
    <property type="match status" value="1"/>
</dbReference>
<feature type="chain" id="PRO_0000430045" description="Osmoprotectant import permease protein OsmY">
    <location>
        <begin position="1"/>
        <end position="236"/>
    </location>
</feature>
<feature type="transmembrane region" description="Helical" evidence="2">
    <location>
        <begin position="9"/>
        <end position="29"/>
    </location>
</feature>
<feature type="transmembrane region" description="Helical" evidence="2">
    <location>
        <begin position="47"/>
        <end position="67"/>
    </location>
</feature>
<feature type="transmembrane region" description="Helical" evidence="2">
    <location>
        <begin position="95"/>
        <end position="115"/>
    </location>
</feature>
<feature type="transmembrane region" description="Helical" evidence="2">
    <location>
        <begin position="126"/>
        <end position="146"/>
    </location>
</feature>
<feature type="transmembrane region" description="Helical" evidence="2">
    <location>
        <begin position="180"/>
        <end position="200"/>
    </location>
</feature>
<feature type="transmembrane region" description="Helical" evidence="2">
    <location>
        <begin position="207"/>
        <end position="227"/>
    </location>
</feature>
<feature type="domain" description="ABC transmembrane type-1" evidence="2">
    <location>
        <begin position="43"/>
        <end position="224"/>
    </location>
</feature>
<name>OSMY_SALTY</name>
<gene>
    <name type="primary">osmY</name>
    <name type="ordered locus">STM1494</name>
</gene>